<reference key="1">
    <citation type="journal article" date="2011" name="Proc. Natl. Acad. Sci. U.S.A.">
        <title>Genomic anatomy of Escherichia coli O157:H7 outbreaks.</title>
        <authorList>
            <person name="Eppinger M."/>
            <person name="Mammel M.K."/>
            <person name="Leclerc J.E."/>
            <person name="Ravel J."/>
            <person name="Cebula T.A."/>
        </authorList>
    </citation>
    <scope>NUCLEOTIDE SEQUENCE [LARGE SCALE GENOMIC DNA]</scope>
    <source>
        <strain>EC4115 / EHEC</strain>
    </source>
</reference>
<accession>B5YQ97</accession>
<feature type="chain" id="PRO_1000114092" description="Aminomethyltransferase">
    <location>
        <begin position="1"/>
        <end position="364"/>
    </location>
</feature>
<gene>
    <name evidence="1" type="primary">gcvT</name>
    <name type="ordered locus">ECH74115_4196</name>
</gene>
<keyword id="KW-0032">Aminotransferase</keyword>
<keyword id="KW-0808">Transferase</keyword>
<evidence type="ECO:0000255" key="1">
    <source>
        <dbReference type="HAMAP-Rule" id="MF_00259"/>
    </source>
</evidence>
<organism>
    <name type="scientific">Escherichia coli O157:H7 (strain EC4115 / EHEC)</name>
    <dbReference type="NCBI Taxonomy" id="444450"/>
    <lineage>
        <taxon>Bacteria</taxon>
        <taxon>Pseudomonadati</taxon>
        <taxon>Pseudomonadota</taxon>
        <taxon>Gammaproteobacteria</taxon>
        <taxon>Enterobacterales</taxon>
        <taxon>Enterobacteriaceae</taxon>
        <taxon>Escherichia</taxon>
    </lineage>
</organism>
<proteinExistence type="inferred from homology"/>
<comment type="function">
    <text evidence="1">The glycine cleavage system catalyzes the degradation of glycine.</text>
</comment>
<comment type="catalytic activity">
    <reaction evidence="1">
        <text>N(6)-[(R)-S(8)-aminomethyldihydrolipoyl]-L-lysyl-[protein] + (6S)-5,6,7,8-tetrahydrofolate = N(6)-[(R)-dihydrolipoyl]-L-lysyl-[protein] + (6R)-5,10-methylene-5,6,7,8-tetrahydrofolate + NH4(+)</text>
        <dbReference type="Rhea" id="RHEA:16945"/>
        <dbReference type="Rhea" id="RHEA-COMP:10475"/>
        <dbReference type="Rhea" id="RHEA-COMP:10492"/>
        <dbReference type="ChEBI" id="CHEBI:15636"/>
        <dbReference type="ChEBI" id="CHEBI:28938"/>
        <dbReference type="ChEBI" id="CHEBI:57453"/>
        <dbReference type="ChEBI" id="CHEBI:83100"/>
        <dbReference type="ChEBI" id="CHEBI:83143"/>
        <dbReference type="EC" id="2.1.2.10"/>
    </reaction>
</comment>
<comment type="subunit">
    <text evidence="1">The glycine cleavage system is composed of four proteins: P, T, L and H.</text>
</comment>
<comment type="similarity">
    <text evidence="1">Belongs to the GcvT family.</text>
</comment>
<dbReference type="EC" id="2.1.2.10" evidence="1"/>
<dbReference type="EMBL" id="CP001164">
    <property type="protein sequence ID" value="ACI34700.1"/>
    <property type="molecule type" value="Genomic_DNA"/>
</dbReference>
<dbReference type="RefSeq" id="WP_000068725.1">
    <property type="nucleotide sequence ID" value="NC_011353.1"/>
</dbReference>
<dbReference type="SMR" id="B5YQ97"/>
<dbReference type="KEGG" id="ecf:ECH74115_4196"/>
<dbReference type="HOGENOM" id="CLU_007884_10_2_6"/>
<dbReference type="GO" id="GO:0005829">
    <property type="term" value="C:cytosol"/>
    <property type="evidence" value="ECO:0007669"/>
    <property type="project" value="TreeGrafter"/>
</dbReference>
<dbReference type="GO" id="GO:0005960">
    <property type="term" value="C:glycine cleavage complex"/>
    <property type="evidence" value="ECO:0007669"/>
    <property type="project" value="InterPro"/>
</dbReference>
<dbReference type="GO" id="GO:0004047">
    <property type="term" value="F:aminomethyltransferase activity"/>
    <property type="evidence" value="ECO:0007669"/>
    <property type="project" value="UniProtKB-UniRule"/>
</dbReference>
<dbReference type="GO" id="GO:0008483">
    <property type="term" value="F:transaminase activity"/>
    <property type="evidence" value="ECO:0007669"/>
    <property type="project" value="UniProtKB-KW"/>
</dbReference>
<dbReference type="GO" id="GO:0019464">
    <property type="term" value="P:glycine decarboxylation via glycine cleavage system"/>
    <property type="evidence" value="ECO:0007669"/>
    <property type="project" value="UniProtKB-UniRule"/>
</dbReference>
<dbReference type="FunFam" id="2.40.30.110:FF:000001">
    <property type="entry name" value="Aminomethyltransferase"/>
    <property type="match status" value="1"/>
</dbReference>
<dbReference type="FunFam" id="3.30.70.1400:FF:000001">
    <property type="entry name" value="Aminomethyltransferase"/>
    <property type="match status" value="1"/>
</dbReference>
<dbReference type="FunFam" id="4.10.1250.10:FF:000001">
    <property type="entry name" value="Aminomethyltransferase"/>
    <property type="match status" value="1"/>
</dbReference>
<dbReference type="Gene3D" id="2.40.30.110">
    <property type="entry name" value="Aminomethyltransferase beta-barrel domains"/>
    <property type="match status" value="1"/>
</dbReference>
<dbReference type="Gene3D" id="3.30.70.1400">
    <property type="entry name" value="Aminomethyltransferase beta-barrel domains"/>
    <property type="match status" value="1"/>
</dbReference>
<dbReference type="Gene3D" id="4.10.1250.10">
    <property type="entry name" value="Aminomethyltransferase fragment"/>
    <property type="match status" value="1"/>
</dbReference>
<dbReference type="Gene3D" id="3.30.1360.120">
    <property type="entry name" value="Probable tRNA modification gtpase trme, domain 1"/>
    <property type="match status" value="1"/>
</dbReference>
<dbReference type="HAMAP" id="MF_00259">
    <property type="entry name" value="GcvT"/>
    <property type="match status" value="1"/>
</dbReference>
<dbReference type="InterPro" id="IPR006223">
    <property type="entry name" value="GCS_T"/>
</dbReference>
<dbReference type="InterPro" id="IPR022903">
    <property type="entry name" value="GCS_T_bac"/>
</dbReference>
<dbReference type="InterPro" id="IPR013977">
    <property type="entry name" value="GCST_C"/>
</dbReference>
<dbReference type="InterPro" id="IPR006222">
    <property type="entry name" value="GCV_T_N"/>
</dbReference>
<dbReference type="InterPro" id="IPR028896">
    <property type="entry name" value="GcvT/YgfZ/DmdA"/>
</dbReference>
<dbReference type="InterPro" id="IPR029043">
    <property type="entry name" value="GcvT/YgfZ_C"/>
</dbReference>
<dbReference type="InterPro" id="IPR027266">
    <property type="entry name" value="TrmE/GcvT_dom1"/>
</dbReference>
<dbReference type="NCBIfam" id="TIGR00528">
    <property type="entry name" value="gcvT"/>
    <property type="match status" value="1"/>
</dbReference>
<dbReference type="NCBIfam" id="NF001567">
    <property type="entry name" value="PRK00389.1"/>
    <property type="match status" value="1"/>
</dbReference>
<dbReference type="PANTHER" id="PTHR43757">
    <property type="entry name" value="AMINOMETHYLTRANSFERASE"/>
    <property type="match status" value="1"/>
</dbReference>
<dbReference type="PANTHER" id="PTHR43757:SF2">
    <property type="entry name" value="AMINOMETHYLTRANSFERASE, MITOCHONDRIAL"/>
    <property type="match status" value="1"/>
</dbReference>
<dbReference type="Pfam" id="PF01571">
    <property type="entry name" value="GCV_T"/>
    <property type="match status" value="1"/>
</dbReference>
<dbReference type="Pfam" id="PF08669">
    <property type="entry name" value="GCV_T_C"/>
    <property type="match status" value="1"/>
</dbReference>
<dbReference type="PIRSF" id="PIRSF006487">
    <property type="entry name" value="GcvT"/>
    <property type="match status" value="1"/>
</dbReference>
<dbReference type="SUPFAM" id="SSF101790">
    <property type="entry name" value="Aminomethyltransferase beta-barrel domain"/>
    <property type="match status" value="1"/>
</dbReference>
<dbReference type="SUPFAM" id="SSF103025">
    <property type="entry name" value="Folate-binding domain"/>
    <property type="match status" value="1"/>
</dbReference>
<sequence>MAQQTPLYEQHTLCGARMVDFHGWMMPLHYGSQIDEHHEVRTDAGMFDVSHMTIVDLRGSRTREFLRYLLANDVAKLTKSGKALYSGMLNASGGVIDDLIVYYFTEDFFRLVVNSATREKDLSWITQHAEPFGIEITVRDDLSMIAVQGPNAQAKAATLFNDAQRQAVEGMKPFFGVQAGDLFIATTGYTGEAGYEIALPNEKAADFWRALVEGGVKPCGLGARDTLRLEAGMNLYGQEMDETISPLAANMGWTIAWEPADRDFIGREALEVQREHGTEKLVGLVMTEKGVLRNELPVRFTDAQGNQHEGIITSGTFSPTLGYSIALARVPKGIGETAIVQIRNREMPVKVTKPVFVRNGKAVA</sequence>
<name>GCST_ECO5E</name>
<protein>
    <recommendedName>
        <fullName evidence="1">Aminomethyltransferase</fullName>
        <ecNumber evidence="1">2.1.2.10</ecNumber>
    </recommendedName>
    <alternativeName>
        <fullName evidence="1">Glycine cleavage system T protein</fullName>
    </alternativeName>
</protein>